<proteinExistence type="evidence at protein level"/>
<comment type="function">
    <text evidence="2">Transfers a succinyl group from succinyl-CoA to L-homoserine, forming succinyl-L-homoserine. In vitro, can also use glutaryl-CoA as acyl donor.</text>
</comment>
<comment type="catalytic activity">
    <reaction evidence="1 2">
        <text>L-homoserine + succinyl-CoA = O-succinyl-L-homoserine + CoA</text>
        <dbReference type="Rhea" id="RHEA:22008"/>
        <dbReference type="ChEBI" id="CHEBI:57287"/>
        <dbReference type="ChEBI" id="CHEBI:57292"/>
        <dbReference type="ChEBI" id="CHEBI:57476"/>
        <dbReference type="ChEBI" id="CHEBI:57661"/>
        <dbReference type="EC" id="2.3.1.46"/>
    </reaction>
</comment>
<comment type="pathway">
    <text evidence="1">Amino-acid biosynthesis; L-methionine biosynthesis via de novo pathway; O-succinyl-L-homoserine from L-homoserine: step 1/1.</text>
</comment>
<comment type="subcellular location">
    <subcellularLocation>
        <location evidence="1">Cytoplasm</location>
    </subcellularLocation>
</comment>
<comment type="similarity">
    <text evidence="1">Belongs to the MetA family.</text>
</comment>
<sequence>MPLVAHNALPTFERLRRDGITVLSTERAANQEIRELHVGLLNMMPDAALEATERQFYRLVGESNPIAQFYMHPFTLETLPRGDKARAHIGRHYEKFEDIRAAGLDALIITGANVSHANLADEAFWQPLIEVIDWAWDNVTSTLCSCLATHAVMQFRYAQTRVLQPRKIWGVFEHRVTDVRHPLVADVNTRFDVPHSRWNDVSRAQFEAAGVKVLVESEEAGVHLAVSGDGLRTVFFQGHPEYDTVSLLKEYKRDLLLATTGALAEPPFPRRYFDRKAQAFLAEFARRTRVGETLVFPEAEVVPLLDNTWHDTAEAVIGNWIGCVYQVTHRERGLPFMPGVDPDNPLGLA</sequence>
<accession>Q3SM51</accession>
<evidence type="ECO:0000255" key="1">
    <source>
        <dbReference type="HAMAP-Rule" id="MF_00295"/>
    </source>
</evidence>
<evidence type="ECO:0000269" key="2">
    <source>
    </source>
</evidence>
<evidence type="ECO:0000303" key="3">
    <source>
    </source>
</evidence>
<evidence type="ECO:0000312" key="4">
    <source>
        <dbReference type="EMBL" id="AAZ96199.1"/>
    </source>
</evidence>
<organism>
    <name type="scientific">Thiobacillus denitrificans (strain ATCC 25259 / T1)</name>
    <dbReference type="NCBI Taxonomy" id="292415"/>
    <lineage>
        <taxon>Bacteria</taxon>
        <taxon>Pseudomonadati</taxon>
        <taxon>Pseudomonadota</taxon>
        <taxon>Betaproteobacteria</taxon>
        <taxon>Nitrosomonadales</taxon>
        <taxon>Thiobacillaceae</taxon>
        <taxon>Thiobacillus</taxon>
    </lineage>
</organism>
<name>METAS_THIDA</name>
<reference key="1">
    <citation type="journal article" date="2006" name="J. Bacteriol.">
        <title>The genome sequence of the obligately chemolithoautotrophic, facultatively anaerobic bacterium Thiobacillus denitrificans.</title>
        <authorList>
            <person name="Beller H.R."/>
            <person name="Chain P.S."/>
            <person name="Letain T.E."/>
            <person name="Chakicherla A."/>
            <person name="Larimer F.W."/>
            <person name="Richardson P.M."/>
            <person name="Coleman M.A."/>
            <person name="Wood A.P."/>
            <person name="Kelly D.P."/>
        </authorList>
    </citation>
    <scope>NUCLEOTIDE SEQUENCE [LARGE SCALE GENOMIC DNA]</scope>
    <source>
        <strain>ATCC 25259 / T1</strain>
    </source>
</reference>
<reference key="2">
    <citation type="journal article" date="2017" name="Nat. Chem. Biol.">
        <title>Parallel evolution of non-homologous isofunctional enzymes in methionine biosynthesis.</title>
        <authorList>
            <person name="Bastard K."/>
            <person name="Perret A."/>
            <person name="Mariage A."/>
            <person name="Bessonnet T."/>
            <person name="Pinet-Turpault A."/>
            <person name="Petit J.L."/>
            <person name="Darii E."/>
            <person name="Bazire P."/>
            <person name="Vergne-Vaxelaire C."/>
            <person name="Brewee C."/>
            <person name="Debard A."/>
            <person name="Pellouin V."/>
            <person name="Besnard-Gonnet M."/>
            <person name="Artiguenave F."/>
            <person name="Medigue C."/>
            <person name="Vallenet D."/>
            <person name="Danchin A."/>
            <person name="Zaparucha A."/>
            <person name="Weissenbach J."/>
            <person name="Salanoubat M."/>
            <person name="de Berardinis V."/>
        </authorList>
    </citation>
    <scope>FUNCTION</scope>
    <scope>CATALYTIC ACTIVITY</scope>
</reference>
<protein>
    <recommendedName>
        <fullName evidence="1">Homoserine O-succinyltransferase</fullName>
        <shortName evidence="1 3">HST</shortName>
        <ecNumber evidence="1 2">2.3.1.46</ecNumber>
    </recommendedName>
    <alternativeName>
        <fullName evidence="1">Homoserine transsuccinylase</fullName>
        <shortName evidence="1">HTS</shortName>
    </alternativeName>
</protein>
<feature type="chain" id="PRO_0000440359" description="Homoserine O-succinyltransferase">
    <location>
        <begin position="1"/>
        <end position="349"/>
    </location>
</feature>
<feature type="active site" description="Acyl-thioester intermediate" evidence="1">
    <location>
        <position position="146"/>
    </location>
</feature>
<feature type="active site" description="Proton acceptor" evidence="1">
    <location>
        <position position="239"/>
    </location>
</feature>
<feature type="active site" evidence="1">
    <location>
        <position position="241"/>
    </location>
</feature>
<feature type="binding site" evidence="1">
    <location>
        <position position="167"/>
    </location>
    <ligand>
        <name>substrate</name>
    </ligand>
</feature>
<feature type="binding site" evidence="1">
    <location>
        <position position="196"/>
    </location>
    <ligand>
        <name>substrate</name>
    </ligand>
</feature>
<feature type="binding site" evidence="1">
    <location>
        <position position="253"/>
    </location>
    <ligand>
        <name>substrate</name>
    </ligand>
</feature>
<feature type="site" description="Important for acyl-CoA specificity" evidence="1">
    <location>
        <position position="113"/>
    </location>
</feature>
<feature type="site" description="Important for acyl-CoA specificity" evidence="1">
    <location>
        <position position="147"/>
    </location>
</feature>
<feature type="site" description="Important for substrate specificity" evidence="1">
    <location>
        <position position="196"/>
    </location>
</feature>
<dbReference type="EC" id="2.3.1.46" evidence="1 2"/>
<dbReference type="EMBL" id="CP000116">
    <property type="protein sequence ID" value="AAZ96199.1"/>
    <property type="molecule type" value="Genomic_DNA"/>
</dbReference>
<dbReference type="RefSeq" id="WP_011310759.1">
    <property type="nucleotide sequence ID" value="NC_007404.1"/>
</dbReference>
<dbReference type="SMR" id="Q3SM51"/>
<dbReference type="STRING" id="292415.Tbd_0246"/>
<dbReference type="KEGG" id="tbd:Tbd_0246"/>
<dbReference type="eggNOG" id="COG1897">
    <property type="taxonomic scope" value="Bacteria"/>
</dbReference>
<dbReference type="HOGENOM" id="CLU_057851_0_1_4"/>
<dbReference type="OrthoDB" id="9772423at2"/>
<dbReference type="UniPathway" id="UPA00051">
    <property type="reaction ID" value="UER00075"/>
</dbReference>
<dbReference type="Proteomes" id="UP000008291">
    <property type="component" value="Chromosome"/>
</dbReference>
<dbReference type="GO" id="GO:0005737">
    <property type="term" value="C:cytoplasm"/>
    <property type="evidence" value="ECO:0007669"/>
    <property type="project" value="UniProtKB-SubCell"/>
</dbReference>
<dbReference type="GO" id="GO:0004414">
    <property type="term" value="F:homoserine O-acetyltransferase activity"/>
    <property type="evidence" value="ECO:0007669"/>
    <property type="project" value="UniProtKB-UniRule"/>
</dbReference>
<dbReference type="GO" id="GO:0008899">
    <property type="term" value="F:homoserine O-succinyltransferase activity"/>
    <property type="evidence" value="ECO:0007669"/>
    <property type="project" value="UniProtKB-EC"/>
</dbReference>
<dbReference type="GO" id="GO:0009086">
    <property type="term" value="P:methionine biosynthetic process"/>
    <property type="evidence" value="ECO:0007669"/>
    <property type="project" value="UniProtKB-UniRule"/>
</dbReference>
<dbReference type="CDD" id="cd03131">
    <property type="entry name" value="GATase1_HTS"/>
    <property type="match status" value="1"/>
</dbReference>
<dbReference type="Gene3D" id="3.40.50.880">
    <property type="match status" value="1"/>
</dbReference>
<dbReference type="HAMAP" id="MF_00295">
    <property type="entry name" value="MetA_acyltransf"/>
    <property type="match status" value="1"/>
</dbReference>
<dbReference type="InterPro" id="IPR029062">
    <property type="entry name" value="Class_I_gatase-like"/>
</dbReference>
<dbReference type="InterPro" id="IPR033752">
    <property type="entry name" value="MetA_family"/>
</dbReference>
<dbReference type="NCBIfam" id="NF003776">
    <property type="entry name" value="PRK05368.1-3"/>
    <property type="match status" value="1"/>
</dbReference>
<dbReference type="PANTHER" id="PTHR20919">
    <property type="entry name" value="HOMOSERINE O-SUCCINYLTRANSFERASE"/>
    <property type="match status" value="1"/>
</dbReference>
<dbReference type="PANTHER" id="PTHR20919:SF0">
    <property type="entry name" value="HOMOSERINE O-SUCCINYLTRANSFERASE"/>
    <property type="match status" value="1"/>
</dbReference>
<dbReference type="Pfam" id="PF04204">
    <property type="entry name" value="HTS"/>
    <property type="match status" value="1"/>
</dbReference>
<dbReference type="PIRSF" id="PIRSF000450">
    <property type="entry name" value="H_ser_succinyltr"/>
    <property type="match status" value="1"/>
</dbReference>
<dbReference type="SUPFAM" id="SSF52317">
    <property type="entry name" value="Class I glutamine amidotransferase-like"/>
    <property type="match status" value="1"/>
</dbReference>
<keyword id="KW-0012">Acyltransferase</keyword>
<keyword id="KW-0028">Amino-acid biosynthesis</keyword>
<keyword id="KW-0963">Cytoplasm</keyword>
<keyword id="KW-0486">Methionine biosynthesis</keyword>
<keyword id="KW-1185">Reference proteome</keyword>
<keyword id="KW-0808">Transferase</keyword>
<gene>
    <name evidence="1 3" type="primary">metAS</name>
    <name evidence="4" type="ordered locus">Tbd_0246</name>
</gene>